<protein>
    <recommendedName>
        <fullName>Bifunctional phosphonoacetaldehyde hydrolase/aminoethylphosphonate transaminase</fullName>
    </recommendedName>
    <domain>
        <recommendedName>
            <fullName>Phosphonoacetaldehyde hydrolase</fullName>
            <shortName>Phosphonatase</shortName>
            <ecNumber>3.11.1.1</ecNumber>
        </recommendedName>
        <alternativeName>
            <fullName>Phosphonoacetaldehyde phosphonohydrolase</fullName>
        </alternativeName>
    </domain>
    <domain>
        <recommendedName>
            <fullName>2-aminoethylphosphonate--pyruvate transaminase</fullName>
            <ecNumber>2.6.1.37</ecNumber>
        </recommendedName>
        <alternativeName>
            <fullName>2-aminoethylphosphonate aminotransferase</fullName>
        </alternativeName>
        <alternativeName>
            <fullName>AEP transaminase</fullName>
            <shortName>AEPT</shortName>
        </alternativeName>
    </domain>
</protein>
<name>PHNXW_CLOD6</name>
<sequence length="636" mass="72044">MKKIYGEKIKAVVFDWAGTTVDYGCFAPLNVFIEIFKRRGIDVTMEEARKPMGKLKIDHIREMCEMDRIKNIWSDKFGKVPTEDDVNELYAEFEPMLFETLEEYTTPIPHVVETIEKLRKNGLKIGSTTGYTREMMNIVEPNAAKKGYSPDFLVTPSEVSQGRPYPWMCYKNAEALGVSPMSSMVKVGDTISDVKEGVNAGMWSVAVIKGSSELGLTQEEVENMDKEELKAKMSIVSKKFKEAGAHFVIETMAELEDILIKIENETIKSDFVPENDYILLTPGPLSTTKSVRASMLKDWCTWDVEYNNLVQDVRRRLVSLATQNTDKYTSVLMQGSGTFSVEAIIGSTISKDGKLLVIANGAYGKRMKDICNYLNIQFVDCTFKDIEAVDLNVVENLLKENKDITHISMVHCETTTGRLNPIQEVGKLAKEYNKIYIVDAMSSFGGIEIDVEDFNIDFLVSSSNKCIQGVPGFGFIIANKEELSKCKGIAKSLSLDVYAQWDTMEKNNGKWRFTSPTHVVRAFYQALLELEEEGSVEKRYARYKENQFTIASRLKSLGFDTLVNDNAQSPVITTFLYPKNAKFEFMEFYTYLKDNGFVIYPGKLTDIDTFRIGSIGEVYPTDMERLADVIEKFINR</sequence>
<gene>
    <name type="primary">phnXW</name>
    <name type="ordered locus">CD630_28490</name>
</gene>
<dbReference type="EC" id="3.11.1.1"/>
<dbReference type="EC" id="2.6.1.37"/>
<dbReference type="EMBL" id="AM180355">
    <property type="protein sequence ID" value="CAJ69737.1"/>
    <property type="molecule type" value="Genomic_DNA"/>
</dbReference>
<dbReference type="RefSeq" id="YP_001089362.1">
    <property type="nucleotide sequence ID" value="NC_009089.1"/>
</dbReference>
<dbReference type="SMR" id="Q183T0"/>
<dbReference type="STRING" id="272563.CD630_28490"/>
<dbReference type="EnsemblBacteria" id="CAJ69737">
    <property type="protein sequence ID" value="CAJ69737"/>
    <property type="gene ID" value="CD630_28490"/>
</dbReference>
<dbReference type="KEGG" id="cdf:CD630_28490"/>
<dbReference type="KEGG" id="pdc:CDIF630_03116"/>
<dbReference type="PATRIC" id="fig|272563.120.peg.3001"/>
<dbReference type="eggNOG" id="COG0075">
    <property type="taxonomic scope" value="Bacteria"/>
</dbReference>
<dbReference type="eggNOG" id="COG0637">
    <property type="taxonomic scope" value="Bacteria"/>
</dbReference>
<dbReference type="OrthoDB" id="389074at2"/>
<dbReference type="PhylomeDB" id="Q183T0"/>
<dbReference type="BioCyc" id="PDIF272563:G12WB-3009-MONOMER"/>
<dbReference type="Proteomes" id="UP000001978">
    <property type="component" value="Chromosome"/>
</dbReference>
<dbReference type="GO" id="GO:0047304">
    <property type="term" value="F:2-aminoethylphosphonate-pyruvate transaminase activity"/>
    <property type="evidence" value="ECO:0007669"/>
    <property type="project" value="UniProtKB-UniRule"/>
</dbReference>
<dbReference type="GO" id="GO:0000287">
    <property type="term" value="F:magnesium ion binding"/>
    <property type="evidence" value="ECO:0007669"/>
    <property type="project" value="UniProtKB-UniRule"/>
</dbReference>
<dbReference type="GO" id="GO:0050194">
    <property type="term" value="F:phosphonoacetaldehyde hydrolase activity"/>
    <property type="evidence" value="ECO:0007669"/>
    <property type="project" value="UniProtKB-UniRule"/>
</dbReference>
<dbReference type="GO" id="GO:0019700">
    <property type="term" value="P:organic phosphonate catabolic process"/>
    <property type="evidence" value="ECO:0007669"/>
    <property type="project" value="InterPro"/>
</dbReference>
<dbReference type="CDD" id="cd02586">
    <property type="entry name" value="HAD_PHN"/>
    <property type="match status" value="1"/>
</dbReference>
<dbReference type="FunFam" id="1.10.150.240:FF:000006">
    <property type="entry name" value="Phosphonoacetaldehyde hydrolase"/>
    <property type="match status" value="1"/>
</dbReference>
<dbReference type="Gene3D" id="3.90.1150.10">
    <property type="entry name" value="Aspartate Aminotransferase, domain 1"/>
    <property type="match status" value="1"/>
</dbReference>
<dbReference type="Gene3D" id="3.40.50.1000">
    <property type="entry name" value="HAD superfamily/HAD-like"/>
    <property type="match status" value="1"/>
</dbReference>
<dbReference type="Gene3D" id="1.10.150.240">
    <property type="entry name" value="Putative phosphatase, domain 2"/>
    <property type="match status" value="1"/>
</dbReference>
<dbReference type="Gene3D" id="3.40.640.10">
    <property type="entry name" value="Type I PLP-dependent aspartate aminotransferase-like (Major domain)"/>
    <property type="match status" value="1"/>
</dbReference>
<dbReference type="HAMAP" id="MF_01376">
    <property type="entry name" value="PhnW_aminotrans_5"/>
    <property type="match status" value="1"/>
</dbReference>
<dbReference type="HAMAP" id="MF_01375">
    <property type="entry name" value="PhnX"/>
    <property type="match status" value="1"/>
</dbReference>
<dbReference type="InterPro" id="IPR000192">
    <property type="entry name" value="Aminotrans_V_dom"/>
</dbReference>
<dbReference type="InterPro" id="IPR036412">
    <property type="entry name" value="HAD-like_sf"/>
</dbReference>
<dbReference type="InterPro" id="IPR006439">
    <property type="entry name" value="HAD-SF_hydro_IA"/>
</dbReference>
<dbReference type="InterPro" id="IPR023214">
    <property type="entry name" value="HAD_sf"/>
</dbReference>
<dbReference type="InterPro" id="IPR012703">
    <property type="entry name" value="NH2EtPonate_pyrv_transaminase"/>
</dbReference>
<dbReference type="InterPro" id="IPR023198">
    <property type="entry name" value="PGP-like_dom2"/>
</dbReference>
<dbReference type="InterPro" id="IPR006323">
    <property type="entry name" value="Phosphonoacetald_hydro"/>
</dbReference>
<dbReference type="InterPro" id="IPR015424">
    <property type="entry name" value="PyrdxlP-dep_Trfase"/>
</dbReference>
<dbReference type="InterPro" id="IPR015421">
    <property type="entry name" value="PyrdxlP-dep_Trfase_major"/>
</dbReference>
<dbReference type="InterPro" id="IPR015422">
    <property type="entry name" value="PyrdxlP-dep_Trfase_small"/>
</dbReference>
<dbReference type="NCBIfam" id="TIGR01549">
    <property type="entry name" value="HAD-SF-IA-v1"/>
    <property type="match status" value="1"/>
</dbReference>
<dbReference type="NCBIfam" id="TIGR03301">
    <property type="entry name" value="PhnW-AepZ"/>
    <property type="match status" value="1"/>
</dbReference>
<dbReference type="NCBIfam" id="TIGR01422">
    <property type="entry name" value="phosphonatase"/>
    <property type="match status" value="1"/>
</dbReference>
<dbReference type="NCBIfam" id="NF010006">
    <property type="entry name" value="PRK13479.1"/>
    <property type="match status" value="1"/>
</dbReference>
<dbReference type="NCBIfam" id="TIGR02326">
    <property type="entry name" value="transamin_PhnW"/>
    <property type="match status" value="1"/>
</dbReference>
<dbReference type="PANTHER" id="PTHR42778">
    <property type="entry name" value="2-AMINOETHYLPHOSPHONATE--PYRUVATE TRANSAMINASE"/>
    <property type="match status" value="1"/>
</dbReference>
<dbReference type="PANTHER" id="PTHR42778:SF1">
    <property type="entry name" value="2-AMINOETHYLPHOSPHONATE--PYRUVATE TRANSAMINASE"/>
    <property type="match status" value="1"/>
</dbReference>
<dbReference type="Pfam" id="PF00266">
    <property type="entry name" value="Aminotran_5"/>
    <property type="match status" value="1"/>
</dbReference>
<dbReference type="Pfam" id="PF00702">
    <property type="entry name" value="Hydrolase"/>
    <property type="match status" value="1"/>
</dbReference>
<dbReference type="SFLD" id="SFLDG01135">
    <property type="entry name" value="C1.5.6:_HAD__Beta-PGM__Phospha"/>
    <property type="match status" value="1"/>
</dbReference>
<dbReference type="SFLD" id="SFLDG01129">
    <property type="entry name" value="C1.5:_HAD__Beta-PGM__Phosphata"/>
    <property type="match status" value="1"/>
</dbReference>
<dbReference type="SUPFAM" id="SSF56784">
    <property type="entry name" value="HAD-like"/>
    <property type="match status" value="1"/>
</dbReference>
<dbReference type="SUPFAM" id="SSF53383">
    <property type="entry name" value="PLP-dependent transferases"/>
    <property type="match status" value="1"/>
</dbReference>
<organism>
    <name type="scientific">Clostridioides difficile (strain 630)</name>
    <name type="common">Peptoclostridium difficile</name>
    <dbReference type="NCBI Taxonomy" id="272563"/>
    <lineage>
        <taxon>Bacteria</taxon>
        <taxon>Bacillati</taxon>
        <taxon>Bacillota</taxon>
        <taxon>Clostridia</taxon>
        <taxon>Peptostreptococcales</taxon>
        <taxon>Peptostreptococcaceae</taxon>
        <taxon>Clostridioides</taxon>
    </lineage>
</organism>
<reference key="1">
    <citation type="journal article" date="2006" name="Nat. Genet.">
        <title>The multidrug-resistant human pathogen Clostridium difficile has a highly mobile, mosaic genome.</title>
        <authorList>
            <person name="Sebaihia M."/>
            <person name="Wren B.W."/>
            <person name="Mullany P."/>
            <person name="Fairweather N.F."/>
            <person name="Minton N."/>
            <person name="Stabler R."/>
            <person name="Thomson N.R."/>
            <person name="Roberts A.P."/>
            <person name="Cerdeno-Tarraga A.M."/>
            <person name="Wang H."/>
            <person name="Holden M.T.G."/>
            <person name="Wright A."/>
            <person name="Churcher C."/>
            <person name="Quail M.A."/>
            <person name="Baker S."/>
            <person name="Bason N."/>
            <person name="Brooks K."/>
            <person name="Chillingworth T."/>
            <person name="Cronin A."/>
            <person name="Davis P."/>
            <person name="Dowd L."/>
            <person name="Fraser A."/>
            <person name="Feltwell T."/>
            <person name="Hance Z."/>
            <person name="Holroyd S."/>
            <person name="Jagels K."/>
            <person name="Moule S."/>
            <person name="Mungall K."/>
            <person name="Price C."/>
            <person name="Rabbinowitsch E."/>
            <person name="Sharp S."/>
            <person name="Simmonds M."/>
            <person name="Stevens K."/>
            <person name="Unwin L."/>
            <person name="Whithead S."/>
            <person name="Dupuy B."/>
            <person name="Dougan G."/>
            <person name="Barrell B."/>
            <person name="Parkhill J."/>
        </authorList>
    </citation>
    <scope>NUCLEOTIDE SEQUENCE [LARGE SCALE GENOMIC DNA]</scope>
    <source>
        <strain>630</strain>
    </source>
</reference>
<keyword id="KW-0032">Aminotransferase</keyword>
<keyword id="KW-0378">Hydrolase</keyword>
<keyword id="KW-0460">Magnesium</keyword>
<keyword id="KW-0479">Metal-binding</keyword>
<keyword id="KW-0511">Multifunctional enzyme</keyword>
<keyword id="KW-0663">Pyridoxal phosphate</keyword>
<keyword id="KW-0670">Pyruvate</keyword>
<keyword id="KW-1185">Reference proteome</keyword>
<keyword id="KW-0704">Schiff base</keyword>
<keyword id="KW-0808">Transferase</keyword>
<feature type="chain" id="PRO_0000284607" description="Bifunctional phosphonoacetaldehyde hydrolase/aminoethylphosphonate transaminase">
    <location>
        <begin position="1"/>
        <end position="636"/>
    </location>
</feature>
<feature type="region of interest" description="Phosphonoacetaldehyde hydrolase">
    <location>
        <begin position="1"/>
        <end position="276"/>
    </location>
</feature>
<feature type="region of interest" description="2-aminoethylphosphonate--pyruvate transaminase">
    <location>
        <begin position="277"/>
        <end position="636"/>
    </location>
</feature>
<feature type="active site" description="Nucleophile" evidence="1">
    <location>
        <position position="15"/>
    </location>
</feature>
<feature type="active site" description="Schiff-base intermediate with substrate" evidence="1">
    <location>
        <position position="56"/>
    </location>
</feature>
<feature type="binding site" evidence="1">
    <location>
        <position position="15"/>
    </location>
    <ligand>
        <name>Mg(2+)</name>
        <dbReference type="ChEBI" id="CHEBI:18420"/>
    </ligand>
</feature>
<feature type="binding site" evidence="1">
    <location>
        <position position="17"/>
    </location>
    <ligand>
        <name>Mg(2+)</name>
        <dbReference type="ChEBI" id="CHEBI:18420"/>
    </ligand>
</feature>
<feature type="binding site" evidence="1">
    <location>
        <position position="189"/>
    </location>
    <ligand>
        <name>Mg(2+)</name>
        <dbReference type="ChEBI" id="CHEBI:18420"/>
    </ligand>
</feature>
<feature type="modified residue" description="N6-(pyridoxal phosphate)lysine" evidence="2">
    <location>
        <position position="465"/>
    </location>
</feature>
<evidence type="ECO:0000250" key="1"/>
<evidence type="ECO:0000255" key="2"/>
<evidence type="ECO:0000305" key="3"/>
<comment type="function">
    <text evidence="1">Involved in phosphonate degradation.</text>
</comment>
<comment type="catalytic activity">
    <reaction>
        <text>(2-aminoethyl)phosphonate + pyruvate = phosphonoacetaldehyde + L-alanine</text>
        <dbReference type="Rhea" id="RHEA:17021"/>
        <dbReference type="ChEBI" id="CHEBI:15361"/>
        <dbReference type="ChEBI" id="CHEBI:57418"/>
        <dbReference type="ChEBI" id="CHEBI:57972"/>
        <dbReference type="ChEBI" id="CHEBI:58383"/>
        <dbReference type="EC" id="2.6.1.37"/>
    </reaction>
</comment>
<comment type="catalytic activity">
    <reaction>
        <text>phosphonoacetaldehyde + H2O = acetaldehyde + phosphate + H(+)</text>
        <dbReference type="Rhea" id="RHEA:18905"/>
        <dbReference type="ChEBI" id="CHEBI:15343"/>
        <dbReference type="ChEBI" id="CHEBI:15377"/>
        <dbReference type="ChEBI" id="CHEBI:15378"/>
        <dbReference type="ChEBI" id="CHEBI:43474"/>
        <dbReference type="ChEBI" id="CHEBI:58383"/>
        <dbReference type="EC" id="3.11.1.1"/>
    </reaction>
</comment>
<comment type="cofactor">
    <cofactor evidence="1">
        <name>Mg(2+)</name>
        <dbReference type="ChEBI" id="CHEBI:18420"/>
    </cofactor>
    <text evidence="1">Binds 1 Mg(2+) ion per subunit.</text>
</comment>
<comment type="cofactor">
    <cofactor evidence="1">
        <name>pyridoxal 5'-phosphate</name>
        <dbReference type="ChEBI" id="CHEBI:597326"/>
    </cofactor>
</comment>
<comment type="subunit">
    <text evidence="1">Homodimer.</text>
</comment>
<comment type="similarity">
    <text evidence="3">In the N-terminal section; belongs to the HAD-like hydrolase superfamily. PhnX family.</text>
</comment>
<comment type="similarity">
    <text evidence="3">In the C-terminal section; belongs to the class-V pyridoxal-phosphate-dependent aminotransferase family. PhnW subfamily.</text>
</comment>
<proteinExistence type="inferred from homology"/>
<accession>Q183T0</accession>